<organism>
    <name type="scientific">Homo sapiens</name>
    <name type="common">Human</name>
    <dbReference type="NCBI Taxonomy" id="9606"/>
    <lineage>
        <taxon>Eukaryota</taxon>
        <taxon>Metazoa</taxon>
        <taxon>Chordata</taxon>
        <taxon>Craniata</taxon>
        <taxon>Vertebrata</taxon>
        <taxon>Euteleostomi</taxon>
        <taxon>Mammalia</taxon>
        <taxon>Eutheria</taxon>
        <taxon>Euarchontoglires</taxon>
        <taxon>Primates</taxon>
        <taxon>Haplorrhini</taxon>
        <taxon>Catarrhini</taxon>
        <taxon>Hominidae</taxon>
        <taxon>Homo</taxon>
    </lineage>
</organism>
<comment type="function">
    <text>Receptor for oxytocin. The activity of this receptor is mediated by G proteins which activate a phosphatidylinositol-calcium second messenger system.</text>
</comment>
<comment type="subcellular location">
    <subcellularLocation>
        <location>Cell membrane</location>
        <topology>Multi-pass membrane protein</topology>
    </subcellularLocation>
</comment>
<comment type="similarity">
    <text evidence="3">Belongs to the G-protein coupled receptor 1 family. Vasopressin/oxytocin receptor subfamily.</text>
</comment>
<comment type="online information" name="Wikipedia">
    <link uri="https://en.wikipedia.org/wiki/Oxytocin"/>
    <text>Oxytocin entry</text>
</comment>
<feature type="chain" id="PRO_0000069998" description="Oxytocin receptor">
    <location>
        <begin position="1"/>
        <end position="389"/>
    </location>
</feature>
<feature type="topological domain" description="Extracellular" evidence="2">
    <location>
        <begin position="1"/>
        <end position="38"/>
    </location>
</feature>
<feature type="transmembrane region" description="Helical; Name=1" evidence="2">
    <location>
        <begin position="39"/>
        <end position="63"/>
    </location>
</feature>
<feature type="topological domain" description="Cytoplasmic" evidence="2">
    <location>
        <begin position="64"/>
        <end position="74"/>
    </location>
</feature>
<feature type="transmembrane region" description="Helical; Name=2" evidence="2">
    <location>
        <begin position="75"/>
        <end position="97"/>
    </location>
</feature>
<feature type="topological domain" description="Extracellular" evidence="2">
    <location>
        <begin position="98"/>
        <end position="113"/>
    </location>
</feature>
<feature type="transmembrane region" description="Helical; Name=3" evidence="2">
    <location>
        <begin position="114"/>
        <end position="135"/>
    </location>
</feature>
<feature type="topological domain" description="Cytoplasmic" evidence="2">
    <location>
        <begin position="136"/>
        <end position="154"/>
    </location>
</feature>
<feature type="transmembrane region" description="Helical; Name=4" evidence="2">
    <location>
        <begin position="155"/>
        <end position="175"/>
    </location>
</feature>
<feature type="topological domain" description="Extracellular" evidence="2">
    <location>
        <begin position="176"/>
        <end position="202"/>
    </location>
</feature>
<feature type="transmembrane region" description="Helical; Name=5" evidence="2">
    <location>
        <begin position="203"/>
        <end position="225"/>
    </location>
</feature>
<feature type="topological domain" description="Cytoplasmic" evidence="2">
    <location>
        <begin position="226"/>
        <end position="275"/>
    </location>
</feature>
<feature type="transmembrane region" description="Helical; Name=6" evidence="2">
    <location>
        <begin position="276"/>
        <end position="294"/>
    </location>
</feature>
<feature type="topological domain" description="Extracellular" evidence="2">
    <location>
        <begin position="295"/>
        <end position="309"/>
    </location>
</feature>
<feature type="transmembrane region" description="Helical; Name=7" evidence="2">
    <location>
        <begin position="310"/>
        <end position="332"/>
    </location>
</feature>
<feature type="topological domain" description="Cytoplasmic" evidence="2">
    <location>
        <begin position="333"/>
        <end position="389"/>
    </location>
</feature>
<feature type="region of interest" description="Disordered" evidence="4">
    <location>
        <begin position="7"/>
        <end position="31"/>
    </location>
</feature>
<feature type="region of interest" description="Disordered" evidence="4">
    <location>
        <begin position="361"/>
        <end position="389"/>
    </location>
</feature>
<feature type="compositionally biased region" description="Low complexity" evidence="4">
    <location>
        <begin position="7"/>
        <end position="26"/>
    </location>
</feature>
<feature type="modified residue" description="Phosphoserine" evidence="1">
    <location>
        <position position="366"/>
    </location>
</feature>
<feature type="modified residue" description="Phosphoserine" evidence="1">
    <location>
        <position position="368"/>
    </location>
</feature>
<feature type="glycosylation site" description="N-linked (GlcNAc...) asparagine" evidence="2">
    <location>
        <position position="8"/>
    </location>
</feature>
<feature type="glycosylation site" description="N-linked (GlcNAc...) asparagine" evidence="2">
    <location>
        <position position="15"/>
    </location>
</feature>
<feature type="glycosylation site" description="N-linked (GlcNAc...) asparagine" evidence="2">
    <location>
        <position position="26"/>
    </location>
</feature>
<feature type="disulfide bond" evidence="3">
    <location>
        <begin position="112"/>
        <end position="187"/>
    </location>
</feature>
<feature type="sequence variant" id="VAR_031570" description="In dbSNP:rs237906.">
    <original>A</original>
    <variation>S</variation>
    <location>
        <position position="16"/>
    </location>
</feature>
<feature type="sequence variant" id="VAR_031571" description="In dbSNP:rs4686302." evidence="5 6">
    <original>A</original>
    <variation>T</variation>
    <location>
        <position position="218"/>
    </location>
</feature>
<feature type="sequence conflict" description="In Ref. 4; CAA56562." evidence="7" ref="4">
    <original>A</original>
    <variation>G</variation>
    <location>
        <position position="308"/>
    </location>
</feature>
<feature type="helix" evidence="9">
    <location>
        <begin position="36"/>
        <end position="66"/>
    </location>
</feature>
<feature type="helix" evidence="9">
    <location>
        <begin position="75"/>
        <end position="91"/>
    </location>
</feature>
<feature type="helix" evidence="9">
    <location>
        <begin position="94"/>
        <end position="101"/>
    </location>
</feature>
<feature type="strand" evidence="9">
    <location>
        <begin position="102"/>
        <end position="104"/>
    </location>
</feature>
<feature type="helix" evidence="9">
    <location>
        <begin position="109"/>
        <end position="142"/>
    </location>
</feature>
<feature type="strand" evidence="8">
    <location>
        <begin position="144"/>
        <end position="146"/>
    </location>
</feature>
<feature type="helix" evidence="9">
    <location>
        <begin position="150"/>
        <end position="167"/>
    </location>
</feature>
<feature type="turn" evidence="9">
    <location>
        <begin position="168"/>
        <end position="170"/>
    </location>
</feature>
<feature type="helix" evidence="9">
    <location>
        <begin position="171"/>
        <end position="174"/>
    </location>
</feature>
<feature type="strand" evidence="9">
    <location>
        <begin position="175"/>
        <end position="181"/>
    </location>
</feature>
<feature type="strand" evidence="9">
    <location>
        <begin position="184"/>
        <end position="189"/>
    </location>
</feature>
<feature type="turn" evidence="9">
    <location>
        <begin position="193"/>
        <end position="195"/>
    </location>
</feature>
<feature type="helix" evidence="9">
    <location>
        <begin position="196"/>
        <end position="208"/>
    </location>
</feature>
<feature type="helix" evidence="9">
    <location>
        <begin position="210"/>
        <end position="234"/>
    </location>
</feature>
<feature type="turn" evidence="9">
    <location>
        <begin position="269"/>
        <end position="273"/>
    </location>
</feature>
<feature type="helix" evidence="9">
    <location>
        <begin position="274"/>
        <end position="298"/>
    </location>
</feature>
<feature type="helix" evidence="9">
    <location>
        <begin position="309"/>
        <end position="315"/>
    </location>
</feature>
<feature type="helix" evidence="9">
    <location>
        <begin position="321"/>
        <end position="331"/>
    </location>
</feature>
<feature type="strand" evidence="9">
    <location>
        <begin position="332"/>
        <end position="334"/>
    </location>
</feature>
<feature type="helix" evidence="9">
    <location>
        <begin position="335"/>
        <end position="344"/>
    </location>
</feature>
<feature type="helix" evidence="8">
    <location>
        <begin position="349"/>
        <end position="351"/>
    </location>
</feature>
<accession>P30559</accession>
<accession>Q15071</accession>
<keyword id="KW-0002">3D-structure</keyword>
<keyword id="KW-1003">Cell membrane</keyword>
<keyword id="KW-1015">Disulfide bond</keyword>
<keyword id="KW-0297">G-protein coupled receptor</keyword>
<keyword id="KW-0325">Glycoprotein</keyword>
<keyword id="KW-0472">Membrane</keyword>
<keyword id="KW-0597">Phosphoprotein</keyword>
<keyword id="KW-1267">Proteomics identification</keyword>
<keyword id="KW-0675">Receptor</keyword>
<keyword id="KW-1185">Reference proteome</keyword>
<keyword id="KW-0807">Transducer</keyword>
<keyword id="KW-0812">Transmembrane</keyword>
<keyword id="KW-1133">Transmembrane helix</keyword>
<name>OXYR_HUMAN</name>
<protein>
    <recommendedName>
        <fullName>Oxytocin receptor</fullName>
        <shortName>OT-R</shortName>
    </recommendedName>
</protein>
<reference key="1">
    <citation type="journal article" date="1992" name="Nature">
        <title>Structure and expression of a human oxytocin receptor.</title>
        <authorList>
            <person name="Kimura T."/>
            <person name="Tanizawa O."/>
            <person name="Mori K."/>
            <person name="Brownstein M.J."/>
            <person name="Okayama H."/>
        </authorList>
    </citation>
    <scope>NUCLEOTIDE SEQUENCE [MRNA]</scope>
    <scope>VARIANT THR-218</scope>
    <source>
        <tissue>Uterus</tissue>
    </source>
</reference>
<reference key="2">
    <citation type="journal article" date="1992" name="Nature">
        <authorList>
            <person name="Kimura T."/>
            <person name="Tanizawa O."/>
            <person name="Mori K."/>
            <person name="Brownstein M.J."/>
            <person name="Okayama H."/>
        </authorList>
    </citation>
    <scope>ERRATUM OF PUBMED:1313946</scope>
    <scope>SEQUENCE REVISION</scope>
</reference>
<reference key="3">
    <citation type="submission" date="2003-09" db="EMBL/GenBank/DDBJ databases">
        <title>cDNA clones of human proteins involved in signal transduction sequenced by the Guthrie cDNA resource center (www.cdna.org).</title>
        <authorList>
            <person name="Kopatz S.A."/>
            <person name="Aronstam R.S."/>
            <person name="Sharma S.V."/>
        </authorList>
    </citation>
    <scope>NUCLEOTIDE SEQUENCE [LARGE SCALE MRNA]</scope>
    <scope>VARIANT THR-218</scope>
    <source>
        <tissue>Ovary</tissue>
    </source>
</reference>
<reference key="4">
    <citation type="journal article" date="1994" name="J. Biol. Chem.">
        <title>Structural organization of the human oxytocin receptor gene.</title>
        <authorList>
            <person name="Inoue T."/>
            <person name="Kimura T."/>
            <person name="Azuma C."/>
            <person name="Inazawa J."/>
            <person name="Takemura M."/>
            <person name="Kikuchi T."/>
            <person name="Kubota Y."/>
            <person name="Ogita K."/>
            <person name="Saji F."/>
        </authorList>
    </citation>
    <scope>NUCLEOTIDE SEQUENCE [GENOMIC DNA] OF 1-308</scope>
</reference>
<gene>
    <name type="primary">OXTR</name>
</gene>
<dbReference type="EMBL" id="X64878">
    <property type="protein sequence ID" value="CAA46097.1"/>
    <property type="molecule type" value="mRNA"/>
</dbReference>
<dbReference type="EMBL" id="AY389507">
    <property type="protein sequence ID" value="AAQ91333.1"/>
    <property type="molecule type" value="mRNA"/>
</dbReference>
<dbReference type="EMBL" id="X80282">
    <property type="protein sequence ID" value="CAA56562.1"/>
    <property type="molecule type" value="Genomic_DNA"/>
</dbReference>
<dbReference type="CCDS" id="CCDS2570.1"/>
<dbReference type="PIR" id="A55493">
    <property type="entry name" value="A55493"/>
</dbReference>
<dbReference type="RefSeq" id="NP_000907.2">
    <property type="nucleotide sequence ID" value="NM_000916.3"/>
</dbReference>
<dbReference type="RefSeq" id="NP_001341582.1">
    <property type="nucleotide sequence ID" value="NM_001354653.2"/>
</dbReference>
<dbReference type="RefSeq" id="NP_001341583.1">
    <property type="nucleotide sequence ID" value="NM_001354654.2"/>
</dbReference>
<dbReference type="RefSeq" id="NP_001341584.1">
    <property type="nucleotide sequence ID" value="NM_001354655.2"/>
</dbReference>
<dbReference type="RefSeq" id="NP_001341585.1">
    <property type="nucleotide sequence ID" value="NM_001354656.3"/>
</dbReference>
<dbReference type="RefSeq" id="XP_011532064.1">
    <property type="nucleotide sequence ID" value="XM_011533762.2"/>
</dbReference>
<dbReference type="PDB" id="6TPK">
    <property type="method" value="X-ray"/>
    <property type="resolution" value="3.20 A"/>
    <property type="chains" value="A=35-356"/>
</dbReference>
<dbReference type="PDB" id="7QVM">
    <property type="method" value="EM"/>
    <property type="resolution" value="3.25 A"/>
    <property type="chains" value="R=1-359"/>
</dbReference>
<dbReference type="PDB" id="7RYC">
    <property type="method" value="EM"/>
    <property type="resolution" value="2.90 A"/>
    <property type="chains" value="O=1-389"/>
</dbReference>
<dbReference type="PDBsum" id="6TPK"/>
<dbReference type="PDBsum" id="7QVM"/>
<dbReference type="PDBsum" id="7RYC"/>
<dbReference type="EMDB" id="EMD-14180"/>
<dbReference type="EMDB" id="EMD-24733"/>
<dbReference type="SMR" id="P30559"/>
<dbReference type="BioGRID" id="111061">
    <property type="interactions" value="14"/>
</dbReference>
<dbReference type="CORUM" id="P30559"/>
<dbReference type="ELM" id="P30559"/>
<dbReference type="FunCoup" id="P30559">
    <property type="interactions" value="1306"/>
</dbReference>
<dbReference type="IntAct" id="P30559">
    <property type="interactions" value="18"/>
</dbReference>
<dbReference type="MINT" id="P30559"/>
<dbReference type="STRING" id="9606.ENSP00000324270"/>
<dbReference type="BindingDB" id="P30559"/>
<dbReference type="ChEMBL" id="CHEMBL2049"/>
<dbReference type="DrugBank" id="DB09059">
    <property type="generic name" value="Atosiban"/>
</dbReference>
<dbReference type="DrugBank" id="DB12292">
    <property type="generic name" value="Barusiban"/>
</dbReference>
<dbReference type="DrugBank" id="DB01282">
    <property type="generic name" value="Carbetocin"/>
</dbReference>
<dbReference type="DrugBank" id="DB00035">
    <property type="generic name" value="Desmopressin"/>
</dbReference>
<dbReference type="DrugBank" id="DB11934">
    <property type="generic name" value="Epelsiban"/>
</dbReference>
<dbReference type="DrugBank" id="DB12643">
    <property type="generic name" value="Nelivaptan"/>
</dbReference>
<dbReference type="DrugBank" id="DB00107">
    <property type="generic name" value="Oxytocin"/>
</dbReference>
<dbReference type="DrugBank" id="DB13929">
    <property type="generic name" value="Relcovaptan"/>
</dbReference>
<dbReference type="DrugBank" id="DB11818">
    <property type="generic name" value="Retosiban"/>
</dbReference>
<dbReference type="DrugBank" id="DB00067">
    <property type="generic name" value="Vasopressin"/>
</dbReference>
<dbReference type="DrugCentral" id="P30559"/>
<dbReference type="GuidetoPHARMACOLOGY" id="369"/>
<dbReference type="TCDB" id="9.A.14.10.4">
    <property type="family name" value="the g-protein-coupled receptor (gpcr) family"/>
</dbReference>
<dbReference type="GlyCosmos" id="P30559">
    <property type="glycosylation" value="3 sites, No reported glycans"/>
</dbReference>
<dbReference type="GlyGen" id="P30559">
    <property type="glycosylation" value="3 sites"/>
</dbReference>
<dbReference type="iPTMnet" id="P30559"/>
<dbReference type="PhosphoSitePlus" id="P30559"/>
<dbReference type="SwissPalm" id="P30559"/>
<dbReference type="BioMuta" id="OXTR"/>
<dbReference type="DMDM" id="143811431"/>
<dbReference type="MassIVE" id="P30559"/>
<dbReference type="PaxDb" id="9606-ENSP00000324270"/>
<dbReference type="PeptideAtlas" id="P30559"/>
<dbReference type="ProteomicsDB" id="54722"/>
<dbReference type="Antibodypedia" id="10144">
    <property type="antibodies" value="365 antibodies from 34 providers"/>
</dbReference>
<dbReference type="CPTC" id="P30559">
    <property type="antibodies" value="2 antibodies"/>
</dbReference>
<dbReference type="DNASU" id="5021"/>
<dbReference type="Ensembl" id="ENST00000316793.8">
    <property type="protein sequence ID" value="ENSP00000324270.2"/>
    <property type="gene ID" value="ENSG00000180914.11"/>
</dbReference>
<dbReference type="GeneID" id="5021"/>
<dbReference type="KEGG" id="hsa:5021"/>
<dbReference type="MANE-Select" id="ENST00000316793.8">
    <property type="protein sequence ID" value="ENSP00000324270.2"/>
    <property type="RefSeq nucleotide sequence ID" value="NM_000916.4"/>
    <property type="RefSeq protein sequence ID" value="NP_000907.2"/>
</dbReference>
<dbReference type="UCSC" id="uc003brc.4">
    <property type="organism name" value="human"/>
</dbReference>
<dbReference type="AGR" id="HGNC:8529"/>
<dbReference type="CTD" id="5021"/>
<dbReference type="DisGeNET" id="5021"/>
<dbReference type="GeneCards" id="OXTR"/>
<dbReference type="HGNC" id="HGNC:8529">
    <property type="gene designation" value="OXTR"/>
</dbReference>
<dbReference type="HPA" id="ENSG00000180914">
    <property type="expression patterns" value="Tissue enriched (breast)"/>
</dbReference>
<dbReference type="MalaCards" id="OXTR"/>
<dbReference type="MIM" id="167055">
    <property type="type" value="gene"/>
</dbReference>
<dbReference type="neXtProt" id="NX_P30559"/>
<dbReference type="OpenTargets" id="ENSG00000180914"/>
<dbReference type="PharmGKB" id="PA32858"/>
<dbReference type="VEuPathDB" id="HostDB:ENSG00000180914"/>
<dbReference type="eggNOG" id="KOG3656">
    <property type="taxonomic scope" value="Eukaryota"/>
</dbReference>
<dbReference type="GeneTree" id="ENSGT01050000244882"/>
<dbReference type="HOGENOM" id="CLU_009579_15_3_1"/>
<dbReference type="InParanoid" id="P30559"/>
<dbReference type="OMA" id="RCFFCCC"/>
<dbReference type="OrthoDB" id="6435638at2759"/>
<dbReference type="PAN-GO" id="P30559">
    <property type="GO annotations" value="9 GO annotations based on evolutionary models"/>
</dbReference>
<dbReference type="PhylomeDB" id="P30559"/>
<dbReference type="TreeFam" id="TF106499"/>
<dbReference type="PathwayCommons" id="P30559"/>
<dbReference type="Reactome" id="R-HSA-388479">
    <property type="pathway name" value="Vasopressin-like receptors"/>
</dbReference>
<dbReference type="Reactome" id="R-HSA-416476">
    <property type="pathway name" value="G alpha (q) signalling events"/>
</dbReference>
<dbReference type="SignaLink" id="P30559"/>
<dbReference type="SIGNOR" id="P30559"/>
<dbReference type="BioGRID-ORCS" id="5021">
    <property type="hits" value="15 hits in 1164 CRISPR screens"/>
</dbReference>
<dbReference type="GeneWiki" id="Oxytocin_receptor"/>
<dbReference type="GenomeRNAi" id="5021"/>
<dbReference type="Pharos" id="P30559">
    <property type="development level" value="Tclin"/>
</dbReference>
<dbReference type="PRO" id="PR:P30559"/>
<dbReference type="Proteomes" id="UP000005640">
    <property type="component" value="Chromosome 3"/>
</dbReference>
<dbReference type="RNAct" id="P30559">
    <property type="molecule type" value="protein"/>
</dbReference>
<dbReference type="Bgee" id="ENSG00000180914">
    <property type="expression patterns" value="Expressed in decidua and 142 other cell types or tissues"/>
</dbReference>
<dbReference type="ExpressionAtlas" id="P30559">
    <property type="expression patterns" value="baseline and differential"/>
</dbReference>
<dbReference type="GO" id="GO:0005886">
    <property type="term" value="C:plasma membrane"/>
    <property type="evidence" value="ECO:0000318"/>
    <property type="project" value="GO_Central"/>
</dbReference>
<dbReference type="GO" id="GO:0004990">
    <property type="term" value="F:oxytocin receptor activity"/>
    <property type="evidence" value="ECO:0000318"/>
    <property type="project" value="GO_Central"/>
</dbReference>
<dbReference type="GO" id="GO:0005000">
    <property type="term" value="F:vasopressin receptor activity"/>
    <property type="evidence" value="ECO:0000318"/>
    <property type="project" value="GO_Central"/>
</dbReference>
<dbReference type="GO" id="GO:0007166">
    <property type="term" value="P:cell surface receptor signaling pathway"/>
    <property type="evidence" value="ECO:0000304"/>
    <property type="project" value="ProtInc"/>
</dbReference>
<dbReference type="GO" id="GO:0032870">
    <property type="term" value="P:cellular response to hormone stimulus"/>
    <property type="evidence" value="ECO:0000318"/>
    <property type="project" value="GO_Central"/>
</dbReference>
<dbReference type="GO" id="GO:0007565">
    <property type="term" value="P:female pregnancy"/>
    <property type="evidence" value="ECO:0000318"/>
    <property type="project" value="GO_Central"/>
</dbReference>
<dbReference type="GO" id="GO:0007186">
    <property type="term" value="P:G protein-coupled receptor signaling pathway"/>
    <property type="evidence" value="ECO:0000318"/>
    <property type="project" value="GO_Central"/>
</dbReference>
<dbReference type="GO" id="GO:0007595">
    <property type="term" value="P:lactation"/>
    <property type="evidence" value="ECO:0000304"/>
    <property type="project" value="ProtInc"/>
</dbReference>
<dbReference type="GO" id="GO:0060137">
    <property type="term" value="P:maternal process involved in parturition"/>
    <property type="evidence" value="ECO:0000318"/>
    <property type="project" value="GO_Central"/>
</dbReference>
<dbReference type="GO" id="GO:0006936">
    <property type="term" value="P:muscle contraction"/>
    <property type="evidence" value="ECO:0000304"/>
    <property type="project" value="ProtInc"/>
</dbReference>
<dbReference type="GO" id="GO:0045777">
    <property type="term" value="P:positive regulation of blood pressure"/>
    <property type="evidence" value="ECO:0007669"/>
    <property type="project" value="Ensembl"/>
</dbReference>
<dbReference type="GO" id="GO:0120162">
    <property type="term" value="P:positive regulation of cold-induced thermogenesis"/>
    <property type="evidence" value="ECO:0000250"/>
    <property type="project" value="YuBioLab"/>
</dbReference>
<dbReference type="GO" id="GO:0045907">
    <property type="term" value="P:positive regulation of vasoconstriction"/>
    <property type="evidence" value="ECO:0000318"/>
    <property type="project" value="GO_Central"/>
</dbReference>
<dbReference type="GO" id="GO:0001992">
    <property type="term" value="P:regulation of systemic arterial blood pressure by vasopressin"/>
    <property type="evidence" value="ECO:0000318"/>
    <property type="project" value="GO_Central"/>
</dbReference>
<dbReference type="CDD" id="cd15387">
    <property type="entry name" value="7tmA_OT_R"/>
    <property type="match status" value="1"/>
</dbReference>
<dbReference type="FunFam" id="1.20.1070.10:FF:000145">
    <property type="entry name" value="Oxytocin receptor"/>
    <property type="match status" value="1"/>
</dbReference>
<dbReference type="Gene3D" id="1.20.1070.10">
    <property type="entry name" value="Rhodopsin 7-helix transmembrane proteins"/>
    <property type="match status" value="1"/>
</dbReference>
<dbReference type="InterPro" id="IPR000276">
    <property type="entry name" value="GPCR_Rhodpsn"/>
</dbReference>
<dbReference type="InterPro" id="IPR017452">
    <property type="entry name" value="GPCR_Rhodpsn_7TM"/>
</dbReference>
<dbReference type="InterPro" id="IPR002062">
    <property type="entry name" value="Oxytocn_rcpt"/>
</dbReference>
<dbReference type="InterPro" id="IPR001817">
    <property type="entry name" value="Vasoprsn_rcpt"/>
</dbReference>
<dbReference type="PANTHER" id="PTHR24241">
    <property type="entry name" value="NEUROPEPTIDE RECEPTOR-RELATED G-PROTEIN COUPLED RECEPTOR"/>
    <property type="match status" value="1"/>
</dbReference>
<dbReference type="PANTHER" id="PTHR24241:SF89">
    <property type="entry name" value="OXYTOCIN RECEPTOR"/>
    <property type="match status" value="1"/>
</dbReference>
<dbReference type="Pfam" id="PF00001">
    <property type="entry name" value="7tm_1"/>
    <property type="match status" value="1"/>
</dbReference>
<dbReference type="PRINTS" id="PR00237">
    <property type="entry name" value="GPCRRHODOPSN"/>
</dbReference>
<dbReference type="PRINTS" id="PR00665">
    <property type="entry name" value="OXYTOCINR"/>
</dbReference>
<dbReference type="PRINTS" id="PR00896">
    <property type="entry name" value="VASOPRESSINR"/>
</dbReference>
<dbReference type="SUPFAM" id="SSF81321">
    <property type="entry name" value="Family A G protein-coupled receptor-like"/>
    <property type="match status" value="1"/>
</dbReference>
<dbReference type="PROSITE" id="PS00237">
    <property type="entry name" value="G_PROTEIN_RECEP_F1_1"/>
    <property type="match status" value="1"/>
</dbReference>
<dbReference type="PROSITE" id="PS50262">
    <property type="entry name" value="G_PROTEIN_RECEP_F1_2"/>
    <property type="match status" value="1"/>
</dbReference>
<sequence length="389" mass="42772">MEGALAANWSAEAANASAAPPGAEGNRTAGPPRRNEALARVEVAVLCLILLLALSGNACVLLALRTTRQKHSRLFFFMKHLSIADLVVAVFQVLPQLLWDITFRFYGPDLLCRLVKYLQVVGMFASTYLLLLMSLDRCLAICQPLRSLRRRTDRLAVLATWLGCLVASAPQVHIFSLREVADGVFDCWAVFIQPWGPKAYITWITLAVYIVPVIVLAACYGLISFKIWQNLRLKTAAAAAAEAPEGAAAGDGGRVALARVSSVKLISKAKIRTVKMTFIIVLAFIVCWTPFFFVQMWSVWDANAPKEASAFIIVMLLASLNSCCNPWIYMLFTGHLFHELVQRFLCCSASYLKGRRLGETSASKKSNSSSFVLSHRSSSQRSCSQPSTA</sequence>
<evidence type="ECO:0000250" key="1">
    <source>
        <dbReference type="UniProtKB" id="P70536"/>
    </source>
</evidence>
<evidence type="ECO:0000255" key="2"/>
<evidence type="ECO:0000255" key="3">
    <source>
        <dbReference type="PROSITE-ProRule" id="PRU00521"/>
    </source>
</evidence>
<evidence type="ECO:0000256" key="4">
    <source>
        <dbReference type="SAM" id="MobiDB-lite"/>
    </source>
</evidence>
<evidence type="ECO:0000269" key="5">
    <source>
    </source>
</evidence>
<evidence type="ECO:0000269" key="6">
    <source ref="3"/>
</evidence>
<evidence type="ECO:0000305" key="7"/>
<evidence type="ECO:0007829" key="8">
    <source>
        <dbReference type="PDB" id="6TPK"/>
    </source>
</evidence>
<evidence type="ECO:0007829" key="9">
    <source>
        <dbReference type="PDB" id="7RYC"/>
    </source>
</evidence>
<proteinExistence type="evidence at protein level"/>